<name>ATPE_STIHE</name>
<reference key="1">
    <citation type="journal article" date="2006" name="Mol. Genet. Genomics">
        <title>Distinctive architecture of the chloroplast genome in the chlorophycean green alga Stigeoclonium helveticum.</title>
        <authorList>
            <person name="Belanger A.-S."/>
            <person name="Brouard J.-S."/>
            <person name="Charlebois P."/>
            <person name="Otis C."/>
            <person name="Lemieux C."/>
            <person name="Turmel M."/>
        </authorList>
    </citation>
    <scope>NUCLEOTIDE SEQUENCE [LARGE SCALE GENOMIC DNA]</scope>
    <source>
        <strain>UTEX 441</strain>
    </source>
</reference>
<organism>
    <name type="scientific">Stigeoclonium helveticum</name>
    <name type="common">Green alga</name>
    <dbReference type="NCBI Taxonomy" id="55999"/>
    <lineage>
        <taxon>Eukaryota</taxon>
        <taxon>Viridiplantae</taxon>
        <taxon>Chlorophyta</taxon>
        <taxon>core chlorophytes</taxon>
        <taxon>Chlorophyceae</taxon>
        <taxon>OCC clade</taxon>
        <taxon>Chaetophorales</taxon>
        <taxon>Chaetophoraceae</taxon>
        <taxon>Stigeoclonium</taxon>
    </lineage>
</organism>
<accession>Q06SF3</accession>
<comment type="function">
    <text evidence="1">Produces ATP from ADP in the presence of a proton gradient across the membrane.</text>
</comment>
<comment type="subunit">
    <text evidence="1">F-type ATPases have 2 components, CF(1) - the catalytic core - and CF(0) - the membrane proton channel. CF(1) has five subunits: alpha(3), beta(3), gamma(1), delta(1), epsilon(1). CF(0) has three main subunits: a, b and c.</text>
</comment>
<comment type="subcellular location">
    <subcellularLocation>
        <location evidence="1">Plastid</location>
        <location evidence="1">Chloroplast thylakoid membrane</location>
        <topology evidence="1">Peripheral membrane protein</topology>
    </subcellularLocation>
</comment>
<comment type="similarity">
    <text evidence="1">Belongs to the ATPase epsilon chain family.</text>
</comment>
<gene>
    <name evidence="1" type="primary">atpE</name>
</gene>
<sequence>MSLQVCVMTPERIFWNGQSEEIILPTNTGEMGVLKNHAPIITGLDVGAMLIRTEKGWTSVAIMGGFGIVGQNRVILLVNEAESADTINAEQAESDFNSAKEKLEQAQSTKQRVEANTQFKRAKARYQVVKNLSKA</sequence>
<protein>
    <recommendedName>
        <fullName evidence="1">ATP synthase epsilon chain, chloroplastic</fullName>
    </recommendedName>
    <alternativeName>
        <fullName evidence="1">ATP synthase F1 sector epsilon subunit</fullName>
    </alternativeName>
    <alternativeName>
        <fullName evidence="1">F-ATPase epsilon subunit</fullName>
    </alternativeName>
</protein>
<geneLocation type="chloroplast"/>
<feature type="chain" id="PRO_0000275222" description="ATP synthase epsilon chain, chloroplastic">
    <location>
        <begin position="1"/>
        <end position="135"/>
    </location>
</feature>
<keyword id="KW-0066">ATP synthesis</keyword>
<keyword id="KW-0139">CF(1)</keyword>
<keyword id="KW-0150">Chloroplast</keyword>
<keyword id="KW-0375">Hydrogen ion transport</keyword>
<keyword id="KW-0406">Ion transport</keyword>
<keyword id="KW-0472">Membrane</keyword>
<keyword id="KW-0934">Plastid</keyword>
<keyword id="KW-0793">Thylakoid</keyword>
<keyword id="KW-0813">Transport</keyword>
<evidence type="ECO:0000255" key="1">
    <source>
        <dbReference type="HAMAP-Rule" id="MF_00530"/>
    </source>
</evidence>
<proteinExistence type="inferred from homology"/>
<dbReference type="EMBL" id="DQ630521">
    <property type="protein sequence ID" value="ABF60148.1"/>
    <property type="molecule type" value="Genomic_DNA"/>
</dbReference>
<dbReference type="RefSeq" id="YP_764413.1">
    <property type="nucleotide sequence ID" value="NC_008372.1"/>
</dbReference>
<dbReference type="SMR" id="Q06SF3"/>
<dbReference type="GeneID" id="4308391"/>
<dbReference type="GO" id="GO:0009535">
    <property type="term" value="C:chloroplast thylakoid membrane"/>
    <property type="evidence" value="ECO:0007669"/>
    <property type="project" value="UniProtKB-SubCell"/>
</dbReference>
<dbReference type="GO" id="GO:0045259">
    <property type="term" value="C:proton-transporting ATP synthase complex"/>
    <property type="evidence" value="ECO:0007669"/>
    <property type="project" value="UniProtKB-KW"/>
</dbReference>
<dbReference type="GO" id="GO:0005524">
    <property type="term" value="F:ATP binding"/>
    <property type="evidence" value="ECO:0007669"/>
    <property type="project" value="UniProtKB-UniRule"/>
</dbReference>
<dbReference type="GO" id="GO:0046933">
    <property type="term" value="F:proton-transporting ATP synthase activity, rotational mechanism"/>
    <property type="evidence" value="ECO:0007669"/>
    <property type="project" value="UniProtKB-UniRule"/>
</dbReference>
<dbReference type="CDD" id="cd12152">
    <property type="entry name" value="F1-ATPase_delta"/>
    <property type="match status" value="1"/>
</dbReference>
<dbReference type="Gene3D" id="6.10.140.480">
    <property type="match status" value="1"/>
</dbReference>
<dbReference type="Gene3D" id="2.60.15.10">
    <property type="entry name" value="F0F1 ATP synthase delta/epsilon subunit, N-terminal"/>
    <property type="match status" value="1"/>
</dbReference>
<dbReference type="HAMAP" id="MF_00530">
    <property type="entry name" value="ATP_synth_epsil_bac"/>
    <property type="match status" value="1"/>
</dbReference>
<dbReference type="InterPro" id="IPR001469">
    <property type="entry name" value="ATP_synth_F1_dsu/esu"/>
</dbReference>
<dbReference type="InterPro" id="IPR020546">
    <property type="entry name" value="ATP_synth_F1_dsu/esu_N"/>
</dbReference>
<dbReference type="InterPro" id="IPR020547">
    <property type="entry name" value="ATP_synth_F1_esu_C"/>
</dbReference>
<dbReference type="InterPro" id="IPR036771">
    <property type="entry name" value="ATPsynth_dsu/esu_N"/>
</dbReference>
<dbReference type="NCBIfam" id="TIGR01216">
    <property type="entry name" value="ATP_synt_epsi"/>
    <property type="match status" value="1"/>
</dbReference>
<dbReference type="PANTHER" id="PTHR13822">
    <property type="entry name" value="ATP SYNTHASE DELTA/EPSILON CHAIN"/>
    <property type="match status" value="1"/>
</dbReference>
<dbReference type="PANTHER" id="PTHR13822:SF10">
    <property type="entry name" value="ATP SYNTHASE EPSILON CHAIN, CHLOROPLASTIC"/>
    <property type="match status" value="1"/>
</dbReference>
<dbReference type="Pfam" id="PF00401">
    <property type="entry name" value="ATP-synt_DE"/>
    <property type="match status" value="1"/>
</dbReference>
<dbReference type="Pfam" id="PF02823">
    <property type="entry name" value="ATP-synt_DE_N"/>
    <property type="match status" value="1"/>
</dbReference>
<dbReference type="SUPFAM" id="SSF51344">
    <property type="entry name" value="Epsilon subunit of F1F0-ATP synthase N-terminal domain"/>
    <property type="match status" value="1"/>
</dbReference>